<organism>
    <name type="scientific">Staphylococcus aureus (strain Mu3 / ATCC 700698)</name>
    <dbReference type="NCBI Taxonomy" id="418127"/>
    <lineage>
        <taxon>Bacteria</taxon>
        <taxon>Bacillati</taxon>
        <taxon>Bacillota</taxon>
        <taxon>Bacilli</taxon>
        <taxon>Bacillales</taxon>
        <taxon>Staphylococcaceae</taxon>
        <taxon>Staphylococcus</taxon>
    </lineage>
</organism>
<protein>
    <recommendedName>
        <fullName evidence="1">Isopentenyl-diphosphate delta-isomerase</fullName>
        <shortName evidence="1">IPP isomerase</shortName>
        <ecNumber evidence="1">5.3.3.2</ecNumber>
    </recommendedName>
    <alternativeName>
        <fullName evidence="1">Isopentenyl diphosphate:dimethylallyl diphosphate isomerase</fullName>
    </alternativeName>
    <alternativeName>
        <fullName evidence="1">Isopentenyl pyrophosphate isomerase</fullName>
    </alternativeName>
    <alternativeName>
        <fullName evidence="1">Type 2 isopentenyl diphosphate isomerase</fullName>
        <shortName evidence="1">IDI-2</shortName>
    </alternativeName>
</protein>
<sequence length="349" mass="38874">MSDFQREQRKNEHVEIAMAQSDAMHSDFDKMRFVHHSIPSINVNDIDLTSQTPDLTMAYPIYINAMTGGSEWTKNINEKLAVVARETRLAMAVGSTHAALRNPRMAETFTIARKMNPEGMIFSNVGADVPVEKALEAVELLEAQALQIHVNSPQELVMPEGNREFVTWLDNIASIVSRVSVPVIIKEVGFGMSKELMHDLQQIGVKYVDVSGKGGTNFVDIENERRANKDMDYLSSWGQSTVESLLETTAYQSEISVFASGGLRTPLDAIKSLALGAKATGMSRPFLNQVENNGIAHTVAYVESFIEHMKSIMTMLDAKNIDDLTQKQIVFSPEIMSWIEQRSLNIHRG</sequence>
<proteinExistence type="inferred from homology"/>
<feature type="chain" id="PRO_1000048457" description="Isopentenyl-diphosphate delta-isomerase">
    <location>
        <begin position="1"/>
        <end position="349"/>
    </location>
</feature>
<feature type="binding site" evidence="1">
    <location>
        <begin position="9"/>
        <end position="10"/>
    </location>
    <ligand>
        <name>substrate</name>
    </ligand>
</feature>
<feature type="binding site" evidence="1">
    <location>
        <begin position="65"/>
        <end position="67"/>
    </location>
    <ligand>
        <name>FMN</name>
        <dbReference type="ChEBI" id="CHEBI:58210"/>
    </ligand>
</feature>
<feature type="binding site" evidence="1">
    <location>
        <begin position="95"/>
        <end position="97"/>
    </location>
    <ligand>
        <name>substrate</name>
    </ligand>
</feature>
<feature type="binding site" evidence="1">
    <location>
        <position position="95"/>
    </location>
    <ligand>
        <name>FMN</name>
        <dbReference type="ChEBI" id="CHEBI:58210"/>
    </ligand>
</feature>
<feature type="binding site" evidence="1">
    <location>
        <position position="124"/>
    </location>
    <ligand>
        <name>FMN</name>
        <dbReference type="ChEBI" id="CHEBI:58210"/>
    </ligand>
</feature>
<feature type="binding site" evidence="1">
    <location>
        <position position="154"/>
    </location>
    <ligand>
        <name>substrate</name>
    </ligand>
</feature>
<feature type="binding site" evidence="1">
    <location>
        <position position="155"/>
    </location>
    <ligand>
        <name>Mg(2+)</name>
        <dbReference type="ChEBI" id="CHEBI:18420"/>
    </ligand>
</feature>
<feature type="binding site" evidence="1">
    <location>
        <position position="186"/>
    </location>
    <ligand>
        <name>FMN</name>
        <dbReference type="ChEBI" id="CHEBI:58210"/>
    </ligand>
</feature>
<feature type="binding site" evidence="1">
    <location>
        <position position="211"/>
    </location>
    <ligand>
        <name>FMN</name>
        <dbReference type="ChEBI" id="CHEBI:58210"/>
    </ligand>
</feature>
<feature type="binding site" evidence="1">
    <location>
        <position position="216"/>
    </location>
    <ligand>
        <name>FMN</name>
        <dbReference type="ChEBI" id="CHEBI:58210"/>
    </ligand>
</feature>
<feature type="binding site" evidence="1">
    <location>
        <begin position="262"/>
        <end position="264"/>
    </location>
    <ligand>
        <name>FMN</name>
        <dbReference type="ChEBI" id="CHEBI:58210"/>
    </ligand>
</feature>
<feature type="binding site" evidence="1">
    <location>
        <begin position="283"/>
        <end position="284"/>
    </location>
    <ligand>
        <name>FMN</name>
        <dbReference type="ChEBI" id="CHEBI:58210"/>
    </ligand>
</feature>
<accession>A7X5W0</accession>
<gene>
    <name evidence="1" type="primary">fni</name>
    <name type="ordered locus">SAHV_2330</name>
</gene>
<dbReference type="EC" id="5.3.3.2" evidence="1"/>
<dbReference type="EMBL" id="AP009324">
    <property type="protein sequence ID" value="BAF79213.1"/>
    <property type="molecule type" value="Genomic_DNA"/>
</dbReference>
<dbReference type="RefSeq" id="WP_001279375.1">
    <property type="nucleotide sequence ID" value="NC_009782.1"/>
</dbReference>
<dbReference type="SMR" id="A7X5W0"/>
<dbReference type="KEGG" id="saw:SAHV_2330"/>
<dbReference type="HOGENOM" id="CLU_065515_0_0_9"/>
<dbReference type="GO" id="GO:0005737">
    <property type="term" value="C:cytoplasm"/>
    <property type="evidence" value="ECO:0007669"/>
    <property type="project" value="UniProtKB-SubCell"/>
</dbReference>
<dbReference type="GO" id="GO:0010181">
    <property type="term" value="F:FMN binding"/>
    <property type="evidence" value="ECO:0007669"/>
    <property type="project" value="UniProtKB-UniRule"/>
</dbReference>
<dbReference type="GO" id="GO:0004452">
    <property type="term" value="F:isopentenyl-diphosphate delta-isomerase activity"/>
    <property type="evidence" value="ECO:0007669"/>
    <property type="project" value="UniProtKB-UniRule"/>
</dbReference>
<dbReference type="GO" id="GO:0000287">
    <property type="term" value="F:magnesium ion binding"/>
    <property type="evidence" value="ECO:0007669"/>
    <property type="project" value="UniProtKB-UniRule"/>
</dbReference>
<dbReference type="GO" id="GO:0070402">
    <property type="term" value="F:NADPH binding"/>
    <property type="evidence" value="ECO:0007669"/>
    <property type="project" value="UniProtKB-UniRule"/>
</dbReference>
<dbReference type="GO" id="GO:0016491">
    <property type="term" value="F:oxidoreductase activity"/>
    <property type="evidence" value="ECO:0007669"/>
    <property type="project" value="InterPro"/>
</dbReference>
<dbReference type="GO" id="GO:0008299">
    <property type="term" value="P:isoprenoid biosynthetic process"/>
    <property type="evidence" value="ECO:0007669"/>
    <property type="project" value="UniProtKB-UniRule"/>
</dbReference>
<dbReference type="CDD" id="cd02811">
    <property type="entry name" value="IDI-2_FMN"/>
    <property type="match status" value="1"/>
</dbReference>
<dbReference type="Gene3D" id="3.20.20.70">
    <property type="entry name" value="Aldolase class I"/>
    <property type="match status" value="1"/>
</dbReference>
<dbReference type="HAMAP" id="MF_00354">
    <property type="entry name" value="Idi_2"/>
    <property type="match status" value="1"/>
</dbReference>
<dbReference type="InterPro" id="IPR013785">
    <property type="entry name" value="Aldolase_TIM"/>
</dbReference>
<dbReference type="InterPro" id="IPR000262">
    <property type="entry name" value="FMN-dep_DH"/>
</dbReference>
<dbReference type="InterPro" id="IPR011179">
    <property type="entry name" value="IPdP_isomerase"/>
</dbReference>
<dbReference type="NCBIfam" id="TIGR02151">
    <property type="entry name" value="IPP_isom_2"/>
    <property type="match status" value="1"/>
</dbReference>
<dbReference type="PANTHER" id="PTHR43665">
    <property type="entry name" value="ISOPENTENYL-DIPHOSPHATE DELTA-ISOMERASE"/>
    <property type="match status" value="1"/>
</dbReference>
<dbReference type="PANTHER" id="PTHR43665:SF1">
    <property type="entry name" value="ISOPENTENYL-DIPHOSPHATE DELTA-ISOMERASE"/>
    <property type="match status" value="1"/>
</dbReference>
<dbReference type="Pfam" id="PF01070">
    <property type="entry name" value="FMN_dh"/>
    <property type="match status" value="1"/>
</dbReference>
<dbReference type="PIRSF" id="PIRSF003314">
    <property type="entry name" value="IPP_isomerase"/>
    <property type="match status" value="1"/>
</dbReference>
<dbReference type="SUPFAM" id="SSF51395">
    <property type="entry name" value="FMN-linked oxidoreductases"/>
    <property type="match status" value="1"/>
</dbReference>
<evidence type="ECO:0000255" key="1">
    <source>
        <dbReference type="HAMAP-Rule" id="MF_00354"/>
    </source>
</evidence>
<comment type="function">
    <text evidence="1">Involved in the biosynthesis of isoprenoids. Catalyzes the 1,3-allylic rearrangement of the homoallylic substrate isopentenyl (IPP) to its allylic isomer, dimethylallyl diphosphate (DMAPP).</text>
</comment>
<comment type="catalytic activity">
    <reaction evidence="1">
        <text>isopentenyl diphosphate = dimethylallyl diphosphate</text>
        <dbReference type="Rhea" id="RHEA:23284"/>
        <dbReference type="ChEBI" id="CHEBI:57623"/>
        <dbReference type="ChEBI" id="CHEBI:128769"/>
        <dbReference type="EC" id="5.3.3.2"/>
    </reaction>
</comment>
<comment type="cofactor">
    <cofactor evidence="1">
        <name>FMN</name>
        <dbReference type="ChEBI" id="CHEBI:58210"/>
    </cofactor>
</comment>
<comment type="cofactor">
    <cofactor evidence="1">
        <name>NADPH</name>
        <dbReference type="ChEBI" id="CHEBI:57783"/>
    </cofactor>
</comment>
<comment type="cofactor">
    <cofactor evidence="1">
        <name>Mg(2+)</name>
        <dbReference type="ChEBI" id="CHEBI:18420"/>
    </cofactor>
</comment>
<comment type="subunit">
    <text evidence="1">Homooctamer. Dimer of tetramers.</text>
</comment>
<comment type="subcellular location">
    <subcellularLocation>
        <location evidence="1">Cytoplasm</location>
    </subcellularLocation>
</comment>
<comment type="similarity">
    <text evidence="1">Belongs to the IPP isomerase type 2 family.</text>
</comment>
<reference key="1">
    <citation type="journal article" date="2008" name="Antimicrob. Agents Chemother.">
        <title>Mutated response regulator graR is responsible for phenotypic conversion of Staphylococcus aureus from heterogeneous vancomycin-intermediate resistance to vancomycin-intermediate resistance.</title>
        <authorList>
            <person name="Neoh H.-M."/>
            <person name="Cui L."/>
            <person name="Yuzawa H."/>
            <person name="Takeuchi F."/>
            <person name="Matsuo M."/>
            <person name="Hiramatsu K."/>
        </authorList>
    </citation>
    <scope>NUCLEOTIDE SEQUENCE [LARGE SCALE GENOMIC DNA]</scope>
    <source>
        <strain>Mu3 / ATCC 700698</strain>
    </source>
</reference>
<name>IDI2_STAA1</name>
<keyword id="KW-0963">Cytoplasm</keyword>
<keyword id="KW-0285">Flavoprotein</keyword>
<keyword id="KW-0288">FMN</keyword>
<keyword id="KW-0413">Isomerase</keyword>
<keyword id="KW-0414">Isoprene biosynthesis</keyword>
<keyword id="KW-0460">Magnesium</keyword>
<keyword id="KW-0479">Metal-binding</keyword>
<keyword id="KW-0521">NADP</keyword>